<evidence type="ECO:0000255" key="1">
    <source>
        <dbReference type="HAMAP-Rule" id="MF_01016"/>
    </source>
</evidence>
<keyword id="KW-1003">Cell membrane</keyword>
<keyword id="KW-0472">Membrane</keyword>
<keyword id="KW-0677">Repeat</keyword>
<keyword id="KW-0812">Transmembrane</keyword>
<keyword id="KW-1133">Transmembrane helix</keyword>
<keyword id="KW-0813">Transport</keyword>
<name>Y014_YERPP</name>
<organism>
    <name type="scientific">Yersinia pestis (strain Pestoides F)</name>
    <dbReference type="NCBI Taxonomy" id="386656"/>
    <lineage>
        <taxon>Bacteria</taxon>
        <taxon>Pseudomonadati</taxon>
        <taxon>Pseudomonadota</taxon>
        <taxon>Gammaproteobacteria</taxon>
        <taxon>Enterobacterales</taxon>
        <taxon>Yersiniaceae</taxon>
        <taxon>Yersinia</taxon>
    </lineage>
</organism>
<proteinExistence type="inferred from homology"/>
<gene>
    <name type="ordered locus">YPDSF_0014</name>
</gene>
<reference key="1">
    <citation type="submission" date="2007-02" db="EMBL/GenBank/DDBJ databases">
        <title>Complete sequence of chromosome of Yersinia pestis Pestoides F.</title>
        <authorList>
            <consortium name="US DOE Joint Genome Institute"/>
            <person name="Copeland A."/>
            <person name="Lucas S."/>
            <person name="Lapidus A."/>
            <person name="Barry K."/>
            <person name="Detter J.C."/>
            <person name="Glavina del Rio T."/>
            <person name="Hammon N."/>
            <person name="Israni S."/>
            <person name="Dalin E."/>
            <person name="Tice H."/>
            <person name="Pitluck S."/>
            <person name="Di Bartolo G."/>
            <person name="Chain P."/>
            <person name="Malfatti S."/>
            <person name="Shin M."/>
            <person name="Vergez L."/>
            <person name="Schmutz J."/>
            <person name="Larimer F."/>
            <person name="Land M."/>
            <person name="Hauser L."/>
            <person name="Worsham P."/>
            <person name="Chu M."/>
            <person name="Bearden S."/>
            <person name="Garcia E."/>
            <person name="Richardson P."/>
        </authorList>
    </citation>
    <scope>NUCLEOTIDE SEQUENCE [LARGE SCALE GENOMIC DNA]</scope>
    <source>
        <strain>Pestoides F</strain>
    </source>
</reference>
<accession>A4TGM8</accession>
<sequence length="552" mass="58702">MSAIALTVSMLALVAVLGLWIGNWKIYGVGLGIGGVLFGGIIVGHFAQTYQIVLNGDMLHFIQEFGLILFVYTIGIQVGPGFFSSLRVSGLRLNCFAILMVVVGGLVTAIIHKLFAVPLPIILGVFSGAVTNTPALGAAQQILTDLGSPPQLVSQMGMGYAMAYPFGICGILLVMWLIRLFFKINIDREAKAFDSSYGQNRELLQTMNVAVRNPNLHGLSVQDVPLLNSDEVVCSRLKRGDLLMVPMPATVIEIGDYLHLVGQRDALEKVRLVVGEEVDVTLSTAGTALQTARVVVTNEAVLGKKIRDLNLKQKYDVVITRLNRAGIELVASNSASLQFGDILNLVGRPEAIEAVSAIVGNAQQKLQQVQMLPVFIGVGLGVLLGSIPLFVPGFPAALRLGLAGGPLVVALILGRIGSIGKLYWFMPPSANLALRELGIVLFLSVVGLKSGGDFINTLVNGDGLAWIGYGAMITGIPLLTVGILARMLVKMNYLTLCGMLAGSMTDPPALAFANGLHPTSGAAALSYATVYPLAMFLRIMSPQILAVLFWTL</sequence>
<dbReference type="EMBL" id="CP000668">
    <property type="protein sequence ID" value="ABP38441.1"/>
    <property type="molecule type" value="Genomic_DNA"/>
</dbReference>
<dbReference type="RefSeq" id="WP_002209634.1">
    <property type="nucleotide sequence ID" value="NZ_CP009715.1"/>
</dbReference>
<dbReference type="SMR" id="A4TGM8"/>
<dbReference type="KEGG" id="ypp:YPDSF_0014"/>
<dbReference type="PATRIC" id="fig|386656.14.peg.564"/>
<dbReference type="GO" id="GO:0005886">
    <property type="term" value="C:plasma membrane"/>
    <property type="evidence" value="ECO:0007669"/>
    <property type="project" value="UniProtKB-SubCell"/>
</dbReference>
<dbReference type="GO" id="GO:0008324">
    <property type="term" value="F:monoatomic cation transmembrane transporter activity"/>
    <property type="evidence" value="ECO:0007669"/>
    <property type="project" value="InterPro"/>
</dbReference>
<dbReference type="GO" id="GO:0006813">
    <property type="term" value="P:potassium ion transport"/>
    <property type="evidence" value="ECO:0007669"/>
    <property type="project" value="InterPro"/>
</dbReference>
<dbReference type="Gene3D" id="3.30.70.1450">
    <property type="entry name" value="Regulator of K+ conductance, C-terminal domain"/>
    <property type="match status" value="2"/>
</dbReference>
<dbReference type="HAMAP" id="MF_01016">
    <property type="entry name" value="YidE"/>
    <property type="match status" value="1"/>
</dbReference>
<dbReference type="InterPro" id="IPR050144">
    <property type="entry name" value="AAE_transporter"/>
</dbReference>
<dbReference type="InterPro" id="IPR006037">
    <property type="entry name" value="RCK_C"/>
</dbReference>
<dbReference type="InterPro" id="IPR036721">
    <property type="entry name" value="RCK_C_sf"/>
</dbReference>
<dbReference type="InterPro" id="IPR023018">
    <property type="entry name" value="Transpt_YidE_put"/>
</dbReference>
<dbReference type="InterPro" id="IPR006512">
    <property type="entry name" value="YidE_YbjL"/>
</dbReference>
<dbReference type="NCBIfam" id="NF003007">
    <property type="entry name" value="PRK03818.1"/>
    <property type="match status" value="1"/>
</dbReference>
<dbReference type="NCBIfam" id="TIGR01625">
    <property type="entry name" value="YidE_YbjL_dupl"/>
    <property type="match status" value="2"/>
</dbReference>
<dbReference type="PANTHER" id="PTHR30445">
    <property type="entry name" value="K(+)_H(+) ANTIPORTER SUBUNIT KHTT"/>
    <property type="match status" value="1"/>
</dbReference>
<dbReference type="PANTHER" id="PTHR30445:SF3">
    <property type="entry name" value="TRANSPORT PROTEIN YIDE-RELATED"/>
    <property type="match status" value="1"/>
</dbReference>
<dbReference type="Pfam" id="PF06826">
    <property type="entry name" value="Asp-Al_Ex"/>
    <property type="match status" value="2"/>
</dbReference>
<dbReference type="Pfam" id="PF02080">
    <property type="entry name" value="TrkA_C"/>
    <property type="match status" value="2"/>
</dbReference>
<dbReference type="SUPFAM" id="SSF116726">
    <property type="entry name" value="TrkA C-terminal domain-like"/>
    <property type="match status" value="2"/>
</dbReference>
<dbReference type="PROSITE" id="PS51202">
    <property type="entry name" value="RCK_C"/>
    <property type="match status" value="2"/>
</dbReference>
<comment type="subcellular location">
    <subcellularLocation>
        <location evidence="1">Cell membrane</location>
        <topology evidence="1">Multi-pass membrane protein</topology>
    </subcellularLocation>
</comment>
<comment type="similarity">
    <text evidence="1">Belongs to the AAE transporter (TC 2.A.81) family. YidE subfamily.</text>
</comment>
<protein>
    <recommendedName>
        <fullName evidence="1">Putative transport protein YPDSF_0014</fullName>
    </recommendedName>
</protein>
<feature type="chain" id="PRO_1000063261" description="Putative transport protein YPDSF_0014">
    <location>
        <begin position="1"/>
        <end position="552"/>
    </location>
</feature>
<feature type="transmembrane region" description="Helical" evidence="1">
    <location>
        <begin position="1"/>
        <end position="21"/>
    </location>
</feature>
<feature type="transmembrane region" description="Helical" evidence="1">
    <location>
        <begin position="26"/>
        <end position="46"/>
    </location>
</feature>
<feature type="transmembrane region" description="Helical" evidence="1">
    <location>
        <begin position="65"/>
        <end position="85"/>
    </location>
</feature>
<feature type="transmembrane region" description="Helical" evidence="1">
    <location>
        <begin position="96"/>
        <end position="116"/>
    </location>
</feature>
<feature type="transmembrane region" description="Helical" evidence="1">
    <location>
        <begin position="119"/>
        <end position="139"/>
    </location>
</feature>
<feature type="transmembrane region" description="Helical" evidence="1">
    <location>
        <begin position="158"/>
        <end position="178"/>
    </location>
</feature>
<feature type="transmembrane region" description="Helical" evidence="1">
    <location>
        <begin position="371"/>
        <end position="391"/>
    </location>
</feature>
<feature type="transmembrane region" description="Helical" evidence="1">
    <location>
        <begin position="393"/>
        <end position="413"/>
    </location>
</feature>
<feature type="transmembrane region" description="Helical" evidence="1">
    <location>
        <begin position="439"/>
        <end position="459"/>
    </location>
</feature>
<feature type="transmembrane region" description="Helical" evidence="1">
    <location>
        <begin position="464"/>
        <end position="484"/>
    </location>
</feature>
<feature type="transmembrane region" description="Helical" evidence="1">
    <location>
        <begin position="493"/>
        <end position="513"/>
    </location>
</feature>
<feature type="transmembrane region" description="Helical" evidence="1">
    <location>
        <begin position="530"/>
        <end position="550"/>
    </location>
</feature>
<feature type="domain" description="RCK C-terminal 1" evidence="1">
    <location>
        <begin position="192"/>
        <end position="276"/>
    </location>
</feature>
<feature type="domain" description="RCK C-terminal 2" evidence="1">
    <location>
        <begin position="279"/>
        <end position="361"/>
    </location>
</feature>